<proteinExistence type="evidence at transcript level"/>
<organism>
    <name type="scientific">Brassica napus</name>
    <name type="common">Rape</name>
    <dbReference type="NCBI Taxonomy" id="3708"/>
    <lineage>
        <taxon>Eukaryota</taxon>
        <taxon>Viridiplantae</taxon>
        <taxon>Streptophyta</taxon>
        <taxon>Embryophyta</taxon>
        <taxon>Tracheophyta</taxon>
        <taxon>Spermatophyta</taxon>
        <taxon>Magnoliopsida</taxon>
        <taxon>eudicotyledons</taxon>
        <taxon>Gunneridae</taxon>
        <taxon>Pentapetalae</taxon>
        <taxon>rosids</taxon>
        <taxon>malvids</taxon>
        <taxon>Brassicales</taxon>
        <taxon>Brassicaceae</taxon>
        <taxon>Brassiceae</taxon>
        <taxon>Brassica</taxon>
    </lineage>
</organism>
<feature type="chain" id="PRO_0000086227" description="Shaggy-related protein kinase theta">
    <location>
        <begin position="1"/>
        <end position="468"/>
    </location>
</feature>
<feature type="domain" description="Protein kinase" evidence="3">
    <location>
        <begin position="134"/>
        <end position="418"/>
    </location>
</feature>
<feature type="region of interest" description="Disordered" evidence="5">
    <location>
        <begin position="1"/>
        <end position="53"/>
    </location>
</feature>
<feature type="region of interest" description="Disordered" evidence="5">
    <location>
        <begin position="91"/>
        <end position="112"/>
    </location>
</feature>
<feature type="active site" description="Proton acceptor" evidence="3 4">
    <location>
        <position position="259"/>
    </location>
</feature>
<feature type="binding site" evidence="3">
    <location>
        <begin position="140"/>
        <end position="148"/>
    </location>
    <ligand>
        <name>ATP</name>
        <dbReference type="ChEBI" id="CHEBI:30616"/>
    </ligand>
</feature>
<feature type="binding site" evidence="3">
    <location>
        <position position="163"/>
    </location>
    <ligand>
        <name>ATP</name>
        <dbReference type="ChEBI" id="CHEBI:30616"/>
    </ligand>
</feature>
<feature type="modified residue" description="Phosphotyrosine" evidence="2">
    <location>
        <position position="294"/>
    </location>
</feature>
<name>KSGT_BRANA</name>
<sequence>MNVMRRLKSIASGRTSISSDPGVDSSLKRPKLDQDNDNLSSRGDDPMQVDQSTDMVVVSQDTVAGTSNVPPPPDQLPEVMNDMRLREDEPHANRGEEDKDMEPPIVNGCGTETGQVITTTVGGRDGKPKQTISYMAQRVVGTGSFGVVFQAKCLETGEQVAIKKVLQDKRYKNRELQIMRLQDHPNVVRLRHSFFSTTDKDELYLNLVLEFVPETVYRALKHYTKMNQHMPIILVQLYTYQICRALNYLHRVVGVCHRDIKPQNLLVNTHTHQLKICDFGSAKMLVPGEPNISYICSRYYRAPELIFGATEYTNAIDMWSGGCVMAELLLGQPLFPGESGIDQLVEIIKILGTPTREEIRCMNPNYTEFKFPQIKAHPWHKIFHKRMPPEAVDLVSRLLQYSPNLRCTALEACAHPFFDDLRAPNVSLPNGRALPPLFNFTAQELAGASTELRQRLIPAHCQGTGNSS</sequence>
<keyword id="KW-0067">ATP-binding</keyword>
<keyword id="KW-0418">Kinase</keyword>
<keyword id="KW-0547">Nucleotide-binding</keyword>
<keyword id="KW-0597">Phosphoprotein</keyword>
<keyword id="KW-0723">Serine/threonine-protein kinase</keyword>
<keyword id="KW-0808">Transferase</keyword>
<protein>
    <recommendedName>
        <fullName>Shaggy-related protein kinase theta</fullName>
        <ecNumber>2.7.11.1</ecNumber>
    </recommendedName>
    <alternativeName>
        <fullName>ASK-theta</fullName>
    </alternativeName>
</protein>
<dbReference type="EC" id="2.7.11.1"/>
<dbReference type="EMBL" id="Y12674">
    <property type="protein sequence ID" value="CAA73214.1"/>
    <property type="molecule type" value="mRNA"/>
</dbReference>
<dbReference type="PIR" id="T08139">
    <property type="entry name" value="T08139"/>
</dbReference>
<dbReference type="RefSeq" id="NP_001303200.1">
    <property type="nucleotide sequence ID" value="NM_001316271.1"/>
</dbReference>
<dbReference type="RefSeq" id="XP_013684319.1">
    <property type="nucleotide sequence ID" value="XM_013828865.1"/>
</dbReference>
<dbReference type="SMR" id="O04160"/>
<dbReference type="GeneID" id="106388722"/>
<dbReference type="KEGG" id="bna:106388722"/>
<dbReference type="OrthoDB" id="272141at2759"/>
<dbReference type="BRENDA" id="2.7.11.26">
    <property type="organism ID" value="944"/>
</dbReference>
<dbReference type="GO" id="GO:0005524">
    <property type="term" value="F:ATP binding"/>
    <property type="evidence" value="ECO:0007669"/>
    <property type="project" value="UniProtKB-KW"/>
</dbReference>
<dbReference type="GO" id="GO:0106310">
    <property type="term" value="F:protein serine kinase activity"/>
    <property type="evidence" value="ECO:0007669"/>
    <property type="project" value="RHEA"/>
</dbReference>
<dbReference type="GO" id="GO:0004674">
    <property type="term" value="F:protein serine/threonine kinase activity"/>
    <property type="evidence" value="ECO:0007669"/>
    <property type="project" value="UniProtKB-KW"/>
</dbReference>
<dbReference type="CDD" id="cd14137">
    <property type="entry name" value="STKc_GSK3"/>
    <property type="match status" value="1"/>
</dbReference>
<dbReference type="FunFam" id="3.30.200.20:FF:000009">
    <property type="entry name" value="Glycogen synthase kinase-3 beta"/>
    <property type="match status" value="1"/>
</dbReference>
<dbReference type="FunFam" id="1.10.510.10:FF:000082">
    <property type="entry name" value="Shaggy-related protein kinase kappa"/>
    <property type="match status" value="1"/>
</dbReference>
<dbReference type="Gene3D" id="3.30.200.20">
    <property type="entry name" value="Phosphorylase Kinase, domain 1"/>
    <property type="match status" value="1"/>
</dbReference>
<dbReference type="Gene3D" id="1.10.510.10">
    <property type="entry name" value="Transferase(Phosphotransferase) domain 1"/>
    <property type="match status" value="1"/>
</dbReference>
<dbReference type="InterPro" id="IPR050591">
    <property type="entry name" value="GSK-3"/>
</dbReference>
<dbReference type="InterPro" id="IPR011009">
    <property type="entry name" value="Kinase-like_dom_sf"/>
</dbReference>
<dbReference type="InterPro" id="IPR000719">
    <property type="entry name" value="Prot_kinase_dom"/>
</dbReference>
<dbReference type="InterPro" id="IPR017441">
    <property type="entry name" value="Protein_kinase_ATP_BS"/>
</dbReference>
<dbReference type="InterPro" id="IPR008271">
    <property type="entry name" value="Ser/Thr_kinase_AS"/>
</dbReference>
<dbReference type="InterPro" id="IPR039192">
    <property type="entry name" value="STKc_GSK3"/>
</dbReference>
<dbReference type="PANTHER" id="PTHR24057">
    <property type="entry name" value="GLYCOGEN SYNTHASE KINASE-3 ALPHA"/>
    <property type="match status" value="1"/>
</dbReference>
<dbReference type="PANTHER" id="PTHR24057:SF60">
    <property type="entry name" value="SHAGGY-RELATED PROTEIN KINASE THETA"/>
    <property type="match status" value="1"/>
</dbReference>
<dbReference type="Pfam" id="PF00069">
    <property type="entry name" value="Pkinase"/>
    <property type="match status" value="1"/>
</dbReference>
<dbReference type="SMART" id="SM00220">
    <property type="entry name" value="S_TKc"/>
    <property type="match status" value="1"/>
</dbReference>
<dbReference type="SUPFAM" id="SSF56112">
    <property type="entry name" value="Protein kinase-like (PK-like)"/>
    <property type="match status" value="1"/>
</dbReference>
<dbReference type="PROSITE" id="PS00107">
    <property type="entry name" value="PROTEIN_KINASE_ATP"/>
    <property type="match status" value="1"/>
</dbReference>
<dbReference type="PROSITE" id="PS50011">
    <property type="entry name" value="PROTEIN_KINASE_DOM"/>
    <property type="match status" value="1"/>
</dbReference>
<dbReference type="PROSITE" id="PS00108">
    <property type="entry name" value="PROTEIN_KINASE_ST"/>
    <property type="match status" value="1"/>
</dbReference>
<reference key="1">
    <citation type="journal article" date="1998" name="Biochim. Biophys. Acta">
        <title>An evolutionary conserved group of plant GSK-3/shaggy-like protein kinase genes preferentially expressed in developing pollen.</title>
        <authorList>
            <person name="Tichtinsky G."/>
            <person name="Tavares R."/>
            <person name="Takvorian A."/>
            <person name="Schwebel-Dugue N."/>
            <person name="Twell D."/>
            <person name="Kreis M."/>
        </authorList>
    </citation>
    <scope>NUCLEOTIDE SEQUENCE [MRNA]</scope>
    <source>
        <strain>cv. Topas</strain>
    </source>
</reference>
<evidence type="ECO:0000250" key="1"/>
<evidence type="ECO:0000250" key="2">
    <source>
        <dbReference type="UniProtKB" id="Q39011"/>
    </source>
</evidence>
<evidence type="ECO:0000255" key="3">
    <source>
        <dbReference type="PROSITE-ProRule" id="PRU00159"/>
    </source>
</evidence>
<evidence type="ECO:0000255" key="4">
    <source>
        <dbReference type="PROSITE-ProRule" id="PRU10027"/>
    </source>
</evidence>
<evidence type="ECO:0000256" key="5">
    <source>
        <dbReference type="SAM" id="MobiDB-lite"/>
    </source>
</evidence>
<evidence type="ECO:0000305" key="6"/>
<comment type="function">
    <text evidence="1">May mediate extracellular signals to regulate transcription in differentiating cells.</text>
</comment>
<comment type="catalytic activity">
    <reaction>
        <text>L-seryl-[protein] + ATP = O-phospho-L-seryl-[protein] + ADP + H(+)</text>
        <dbReference type="Rhea" id="RHEA:17989"/>
        <dbReference type="Rhea" id="RHEA-COMP:9863"/>
        <dbReference type="Rhea" id="RHEA-COMP:11604"/>
        <dbReference type="ChEBI" id="CHEBI:15378"/>
        <dbReference type="ChEBI" id="CHEBI:29999"/>
        <dbReference type="ChEBI" id="CHEBI:30616"/>
        <dbReference type="ChEBI" id="CHEBI:83421"/>
        <dbReference type="ChEBI" id="CHEBI:456216"/>
        <dbReference type="EC" id="2.7.11.1"/>
    </reaction>
</comment>
<comment type="catalytic activity">
    <reaction>
        <text>L-threonyl-[protein] + ATP = O-phospho-L-threonyl-[protein] + ADP + H(+)</text>
        <dbReference type="Rhea" id="RHEA:46608"/>
        <dbReference type="Rhea" id="RHEA-COMP:11060"/>
        <dbReference type="Rhea" id="RHEA-COMP:11605"/>
        <dbReference type="ChEBI" id="CHEBI:15378"/>
        <dbReference type="ChEBI" id="CHEBI:30013"/>
        <dbReference type="ChEBI" id="CHEBI:30616"/>
        <dbReference type="ChEBI" id="CHEBI:61977"/>
        <dbReference type="ChEBI" id="CHEBI:456216"/>
        <dbReference type="EC" id="2.7.11.1"/>
    </reaction>
</comment>
<comment type="tissue specificity">
    <text>In developing pollen.</text>
</comment>
<comment type="PTM">
    <text evidence="1">Autophosphorylated mainly on threonine and serine residues.</text>
</comment>
<comment type="similarity">
    <text evidence="6">Belongs to the protein kinase superfamily. CMGC Ser/Thr protein kinase family. GSK-3 subfamily.</text>
</comment>
<accession>O04160</accession>